<organism>
    <name type="scientific">Arabidopsis thaliana</name>
    <name type="common">Mouse-ear cress</name>
    <dbReference type="NCBI Taxonomy" id="3702"/>
    <lineage>
        <taxon>Eukaryota</taxon>
        <taxon>Viridiplantae</taxon>
        <taxon>Streptophyta</taxon>
        <taxon>Embryophyta</taxon>
        <taxon>Tracheophyta</taxon>
        <taxon>Spermatophyta</taxon>
        <taxon>Magnoliopsida</taxon>
        <taxon>eudicotyledons</taxon>
        <taxon>Gunneridae</taxon>
        <taxon>Pentapetalae</taxon>
        <taxon>rosids</taxon>
        <taxon>malvids</taxon>
        <taxon>Brassicales</taxon>
        <taxon>Brassicaceae</taxon>
        <taxon>Camelineae</taxon>
        <taxon>Arabidopsis</taxon>
    </lineage>
</organism>
<evidence type="ECO:0000255" key="1"/>
<evidence type="ECO:0000303" key="2">
    <source>
    </source>
</evidence>
<evidence type="ECO:0000305" key="3"/>
<evidence type="ECO:0000305" key="4">
    <source>
    </source>
</evidence>
<evidence type="ECO:0000312" key="5">
    <source>
        <dbReference type="Araport" id="AT4G15470"/>
    </source>
</evidence>
<evidence type="ECO:0000312" key="6">
    <source>
        <dbReference type="EMBL" id="CAB10325.1"/>
    </source>
</evidence>
<evidence type="ECO:0000312" key="7">
    <source>
        <dbReference type="EMBL" id="CAB78589.1"/>
    </source>
</evidence>
<comment type="subcellular location">
    <subcellularLocation>
        <location evidence="3">Membrane</location>
        <topology evidence="3">Multi-pass membrane protein</topology>
    </subcellularLocation>
</comment>
<comment type="similarity">
    <text evidence="3">Belongs to the BI1 family.</text>
</comment>
<comment type="caution">
    <text evidence="4">Was originally thought to contain a F-box domain and LRR repeats, but it lacks both types of domains.</text>
</comment>
<comment type="sequence caution" evidence="3">
    <conflict type="frameshift">
        <sequence resource="EMBL-CDS" id="AAL07001"/>
    </conflict>
</comment>
<comment type="sequence caution" evidence="3">
    <conflict type="erroneous gene model prediction">
        <sequence resource="EMBL-CDS" id="CAB10325"/>
    </conflict>
    <text>The predicted gene At4g15470 has been split into 2 genes: At4g15470 and At4g15475.</text>
</comment>
<comment type="sequence caution" evidence="3">
    <conflict type="erroneous gene model prediction">
        <sequence resource="EMBL-CDS" id="CAB78589"/>
    </conflict>
    <text>The predicted gene At4g15470 has been split into 2 genes: At4g15470 and At4g15475.</text>
</comment>
<proteinExistence type="evidence at transcript level"/>
<sequence length="256" mass="28168">MDKPYGYASVSMSGIDRSAGKDIDLEMGVGEATLYPGLSYGENQLRWGFIRKVYGILSAQLLLTTLISAVVVLNPPVNDLLTGSPGILLFLCIVPFILIWPLHIYHQKHPVNLILLALFTVSLSFTVGVSCAMTEGRIVLQALILTLSVVGSLTAYTFWAAKKGKDFSFLGPILFTSLIILVVTSFIQMFFPLGPTSVAVYGGFSALVFCGYIVYDTDNLIKRFTYDEYILASVALYLDILNLFLTILRILRQGDN</sequence>
<name>LFG5_ARATH</name>
<protein>
    <recommendedName>
        <fullName>BI1-like protein</fullName>
    </recommendedName>
    <alternativeName>
        <fullName evidence="2">Protein LIFEGUARD 5</fullName>
        <shortName evidence="2">AtLFG5</shortName>
    </alternativeName>
</protein>
<gene>
    <name evidence="2" type="primary">LFG5</name>
    <name evidence="5" type="ordered locus">At4g15470</name>
    <name evidence="6" type="ORF">dl3775w</name>
    <name evidence="7" type="ORF">FCAALL.58</name>
</gene>
<reference key="1">
    <citation type="journal article" date="1998" name="Nature">
        <title>Analysis of 1.9 Mb of contiguous sequence from chromosome 4 of Arabidopsis thaliana.</title>
        <authorList>
            <person name="Bevan M."/>
            <person name="Bancroft I."/>
            <person name="Bent E."/>
            <person name="Love K."/>
            <person name="Goodman H.M."/>
            <person name="Dean C."/>
            <person name="Bergkamp R."/>
            <person name="Dirkse W."/>
            <person name="van Staveren M."/>
            <person name="Stiekema W."/>
            <person name="Drost L."/>
            <person name="Ridley P."/>
            <person name="Hudson S.-A."/>
            <person name="Patel K."/>
            <person name="Murphy G."/>
            <person name="Piffanelli P."/>
            <person name="Wedler H."/>
            <person name="Wedler E."/>
            <person name="Wambutt R."/>
            <person name="Weitzenegger T."/>
            <person name="Pohl T."/>
            <person name="Terryn N."/>
            <person name="Gielen J."/>
            <person name="Villarroel R."/>
            <person name="De Clercq R."/>
            <person name="van Montagu M."/>
            <person name="Lecharny A."/>
            <person name="Aubourg S."/>
            <person name="Gy I."/>
            <person name="Kreis M."/>
            <person name="Lao N."/>
            <person name="Kavanagh T."/>
            <person name="Hempel S."/>
            <person name="Kotter P."/>
            <person name="Entian K.-D."/>
            <person name="Rieger M."/>
            <person name="Schaefer M."/>
            <person name="Funk B."/>
            <person name="Mueller-Auer S."/>
            <person name="Silvey M."/>
            <person name="James R."/>
            <person name="Monfort A."/>
            <person name="Pons A."/>
            <person name="Puigdomenech P."/>
            <person name="Douka A."/>
            <person name="Voukelatou E."/>
            <person name="Milioni D."/>
            <person name="Hatzopoulos P."/>
            <person name="Piravandi E."/>
            <person name="Obermaier B."/>
            <person name="Hilbert H."/>
            <person name="Duesterhoeft A."/>
            <person name="Moores T."/>
            <person name="Jones J.D.G."/>
            <person name="Eneva T."/>
            <person name="Palme K."/>
            <person name="Benes V."/>
            <person name="Rechmann S."/>
            <person name="Ansorge W."/>
            <person name="Cooke R."/>
            <person name="Berger C."/>
            <person name="Delseny M."/>
            <person name="Voet M."/>
            <person name="Volckaert G."/>
            <person name="Mewes H.-W."/>
            <person name="Klosterman S."/>
            <person name="Schueller C."/>
            <person name="Chalwatzis N."/>
        </authorList>
    </citation>
    <scope>NUCLEOTIDE SEQUENCE [LARGE SCALE GENOMIC DNA]</scope>
    <source>
        <strain>cv. Columbia</strain>
    </source>
</reference>
<reference key="2">
    <citation type="journal article" date="1999" name="Nature">
        <title>Sequence and analysis of chromosome 4 of the plant Arabidopsis thaliana.</title>
        <authorList>
            <person name="Mayer K.F.X."/>
            <person name="Schueller C."/>
            <person name="Wambutt R."/>
            <person name="Murphy G."/>
            <person name="Volckaert G."/>
            <person name="Pohl T."/>
            <person name="Duesterhoeft A."/>
            <person name="Stiekema W."/>
            <person name="Entian K.-D."/>
            <person name="Terryn N."/>
            <person name="Harris B."/>
            <person name="Ansorge W."/>
            <person name="Brandt P."/>
            <person name="Grivell L.A."/>
            <person name="Rieger M."/>
            <person name="Weichselgartner M."/>
            <person name="de Simone V."/>
            <person name="Obermaier B."/>
            <person name="Mache R."/>
            <person name="Mueller M."/>
            <person name="Kreis M."/>
            <person name="Delseny M."/>
            <person name="Puigdomenech P."/>
            <person name="Watson M."/>
            <person name="Schmidtheini T."/>
            <person name="Reichert B."/>
            <person name="Portetelle D."/>
            <person name="Perez-Alonso M."/>
            <person name="Boutry M."/>
            <person name="Bancroft I."/>
            <person name="Vos P."/>
            <person name="Hoheisel J."/>
            <person name="Zimmermann W."/>
            <person name="Wedler H."/>
            <person name="Ridley P."/>
            <person name="Langham S.-A."/>
            <person name="McCullagh B."/>
            <person name="Bilham L."/>
            <person name="Robben J."/>
            <person name="van der Schueren J."/>
            <person name="Grymonprez B."/>
            <person name="Chuang Y.-J."/>
            <person name="Vandenbussche F."/>
            <person name="Braeken M."/>
            <person name="Weltjens I."/>
            <person name="Voet M."/>
            <person name="Bastiaens I."/>
            <person name="Aert R."/>
            <person name="Defoor E."/>
            <person name="Weitzenegger T."/>
            <person name="Bothe G."/>
            <person name="Ramsperger U."/>
            <person name="Hilbert H."/>
            <person name="Braun M."/>
            <person name="Holzer E."/>
            <person name="Brandt A."/>
            <person name="Peters S."/>
            <person name="van Staveren M."/>
            <person name="Dirkse W."/>
            <person name="Mooijman P."/>
            <person name="Klein Lankhorst R."/>
            <person name="Rose M."/>
            <person name="Hauf J."/>
            <person name="Koetter P."/>
            <person name="Berneiser S."/>
            <person name="Hempel S."/>
            <person name="Feldpausch M."/>
            <person name="Lamberth S."/>
            <person name="Van den Daele H."/>
            <person name="De Keyser A."/>
            <person name="Buysshaert C."/>
            <person name="Gielen J."/>
            <person name="Villarroel R."/>
            <person name="De Clercq R."/>
            <person name="van Montagu M."/>
            <person name="Rogers J."/>
            <person name="Cronin A."/>
            <person name="Quail M.A."/>
            <person name="Bray-Allen S."/>
            <person name="Clark L."/>
            <person name="Doggett J."/>
            <person name="Hall S."/>
            <person name="Kay M."/>
            <person name="Lennard N."/>
            <person name="McLay K."/>
            <person name="Mayes R."/>
            <person name="Pettett A."/>
            <person name="Rajandream M.A."/>
            <person name="Lyne M."/>
            <person name="Benes V."/>
            <person name="Rechmann S."/>
            <person name="Borkova D."/>
            <person name="Bloecker H."/>
            <person name="Scharfe M."/>
            <person name="Grimm M."/>
            <person name="Loehnert T.-H."/>
            <person name="Dose S."/>
            <person name="de Haan M."/>
            <person name="Maarse A.C."/>
            <person name="Schaefer M."/>
            <person name="Mueller-Auer S."/>
            <person name="Gabel C."/>
            <person name="Fuchs M."/>
            <person name="Fartmann B."/>
            <person name="Granderath K."/>
            <person name="Dauner D."/>
            <person name="Herzl A."/>
            <person name="Neumann S."/>
            <person name="Argiriou A."/>
            <person name="Vitale D."/>
            <person name="Liguori R."/>
            <person name="Piravandi E."/>
            <person name="Massenet O."/>
            <person name="Quigley F."/>
            <person name="Clabauld G."/>
            <person name="Muendlein A."/>
            <person name="Felber R."/>
            <person name="Schnabl S."/>
            <person name="Hiller R."/>
            <person name="Schmidt W."/>
            <person name="Lecharny A."/>
            <person name="Aubourg S."/>
            <person name="Chefdor F."/>
            <person name="Cooke R."/>
            <person name="Berger C."/>
            <person name="Monfort A."/>
            <person name="Casacuberta E."/>
            <person name="Gibbons T."/>
            <person name="Weber N."/>
            <person name="Vandenbol M."/>
            <person name="Bargues M."/>
            <person name="Terol J."/>
            <person name="Torres A."/>
            <person name="Perez-Perez A."/>
            <person name="Purnelle B."/>
            <person name="Bent E."/>
            <person name="Johnson S."/>
            <person name="Tacon D."/>
            <person name="Jesse T."/>
            <person name="Heijnen L."/>
            <person name="Schwarz S."/>
            <person name="Scholler P."/>
            <person name="Heber S."/>
            <person name="Francs P."/>
            <person name="Bielke C."/>
            <person name="Frishman D."/>
            <person name="Haase D."/>
            <person name="Lemcke K."/>
            <person name="Mewes H.-W."/>
            <person name="Stocker S."/>
            <person name="Zaccaria P."/>
            <person name="Bevan M."/>
            <person name="Wilson R.K."/>
            <person name="de la Bastide M."/>
            <person name="Habermann K."/>
            <person name="Parnell L."/>
            <person name="Dedhia N."/>
            <person name="Gnoj L."/>
            <person name="Schutz K."/>
            <person name="Huang E."/>
            <person name="Spiegel L."/>
            <person name="Sekhon M."/>
            <person name="Murray J."/>
            <person name="Sheet P."/>
            <person name="Cordes M."/>
            <person name="Abu-Threideh J."/>
            <person name="Stoneking T."/>
            <person name="Kalicki J."/>
            <person name="Graves T."/>
            <person name="Harmon G."/>
            <person name="Edwards J."/>
            <person name="Latreille P."/>
            <person name="Courtney L."/>
            <person name="Cloud J."/>
            <person name="Abbott A."/>
            <person name="Scott K."/>
            <person name="Johnson D."/>
            <person name="Minx P."/>
            <person name="Bentley D."/>
            <person name="Fulton B."/>
            <person name="Miller N."/>
            <person name="Greco T."/>
            <person name="Kemp K."/>
            <person name="Kramer J."/>
            <person name="Fulton L."/>
            <person name="Mardis E."/>
            <person name="Dante M."/>
            <person name="Pepin K."/>
            <person name="Hillier L.W."/>
            <person name="Nelson J."/>
            <person name="Spieth J."/>
            <person name="Ryan E."/>
            <person name="Andrews S."/>
            <person name="Geisel C."/>
            <person name="Layman D."/>
            <person name="Du H."/>
            <person name="Ali J."/>
            <person name="Berghoff A."/>
            <person name="Jones K."/>
            <person name="Drone K."/>
            <person name="Cotton M."/>
            <person name="Joshu C."/>
            <person name="Antonoiu B."/>
            <person name="Zidanic M."/>
            <person name="Strong C."/>
            <person name="Sun H."/>
            <person name="Lamar B."/>
            <person name="Yordan C."/>
            <person name="Ma P."/>
            <person name="Zhong J."/>
            <person name="Preston R."/>
            <person name="Vil D."/>
            <person name="Shekher M."/>
            <person name="Matero A."/>
            <person name="Shah R."/>
            <person name="Swaby I.K."/>
            <person name="O'Shaughnessy A."/>
            <person name="Rodriguez M."/>
            <person name="Hoffman J."/>
            <person name="Till S."/>
            <person name="Granat S."/>
            <person name="Shohdy N."/>
            <person name="Hasegawa A."/>
            <person name="Hameed A."/>
            <person name="Lodhi M."/>
            <person name="Johnson A."/>
            <person name="Chen E."/>
            <person name="Marra M.A."/>
            <person name="Martienssen R."/>
            <person name="McCombie W.R."/>
        </authorList>
    </citation>
    <scope>NUCLEOTIDE SEQUENCE [LARGE SCALE GENOMIC DNA]</scope>
    <source>
        <strain>cv. Columbia</strain>
    </source>
</reference>
<reference key="3">
    <citation type="journal article" date="2017" name="Plant J.">
        <title>Araport11: a complete reannotation of the Arabidopsis thaliana reference genome.</title>
        <authorList>
            <person name="Cheng C.Y."/>
            <person name="Krishnakumar V."/>
            <person name="Chan A.P."/>
            <person name="Thibaud-Nissen F."/>
            <person name="Schobel S."/>
            <person name="Town C.D."/>
        </authorList>
    </citation>
    <scope>GENOME REANNOTATION</scope>
    <source>
        <strain>cv. Columbia</strain>
    </source>
</reference>
<reference key="4">
    <citation type="journal article" date="2003" name="Science">
        <title>Empirical analysis of transcriptional activity in the Arabidopsis genome.</title>
        <authorList>
            <person name="Yamada K."/>
            <person name="Lim J."/>
            <person name="Dale J.M."/>
            <person name="Chen H."/>
            <person name="Shinn P."/>
            <person name="Palm C.J."/>
            <person name="Southwick A.M."/>
            <person name="Wu H.C."/>
            <person name="Kim C.J."/>
            <person name="Nguyen M."/>
            <person name="Pham P.K."/>
            <person name="Cheuk R.F."/>
            <person name="Karlin-Newmann G."/>
            <person name="Liu S.X."/>
            <person name="Lam B."/>
            <person name="Sakano H."/>
            <person name="Wu T."/>
            <person name="Yu G."/>
            <person name="Miranda M."/>
            <person name="Quach H.L."/>
            <person name="Tripp M."/>
            <person name="Chang C.H."/>
            <person name="Lee J.M."/>
            <person name="Toriumi M.J."/>
            <person name="Chan M.M."/>
            <person name="Tang C.C."/>
            <person name="Onodera C.S."/>
            <person name="Deng J.M."/>
            <person name="Akiyama K."/>
            <person name="Ansari Y."/>
            <person name="Arakawa T."/>
            <person name="Banh J."/>
            <person name="Banno F."/>
            <person name="Bowser L."/>
            <person name="Brooks S.Y."/>
            <person name="Carninci P."/>
            <person name="Chao Q."/>
            <person name="Choy N."/>
            <person name="Enju A."/>
            <person name="Goldsmith A.D."/>
            <person name="Gurjal M."/>
            <person name="Hansen N.F."/>
            <person name="Hayashizaki Y."/>
            <person name="Johnson-Hopson C."/>
            <person name="Hsuan V.W."/>
            <person name="Iida K."/>
            <person name="Karnes M."/>
            <person name="Khan S."/>
            <person name="Koesema E."/>
            <person name="Ishida J."/>
            <person name="Jiang P.X."/>
            <person name="Jones T."/>
            <person name="Kawai J."/>
            <person name="Kamiya A."/>
            <person name="Meyers C."/>
            <person name="Nakajima M."/>
            <person name="Narusaka M."/>
            <person name="Seki M."/>
            <person name="Sakurai T."/>
            <person name="Satou M."/>
            <person name="Tamse R."/>
            <person name="Vaysberg M."/>
            <person name="Wallender E.K."/>
            <person name="Wong C."/>
            <person name="Yamamura Y."/>
            <person name="Yuan S."/>
            <person name="Shinozaki K."/>
            <person name="Davis R.W."/>
            <person name="Theologis A."/>
            <person name="Ecker J.R."/>
        </authorList>
    </citation>
    <scope>NUCLEOTIDE SEQUENCE [LARGE SCALE MRNA]</scope>
    <source>
        <strain>cv. Columbia</strain>
    </source>
</reference>
<reference key="5">
    <citation type="journal article" date="2000" name="Trends Plant Sci.">
        <title>F-box proteins in Arabidopsis.</title>
        <authorList>
            <person name="Xiao W."/>
            <person name="Jang J.-C."/>
        </authorList>
    </citation>
    <scope>GENE FAMILY</scope>
    <scope>NOMENCLATURE</scope>
</reference>
<reference key="6">
    <citation type="journal article" date="2009" name="Biosci. Biotechnol. Biochem.">
        <title>Chemical genetics reveal the novel transmembrane protein BIL4, which mediates plant cell elongation in brassinosteroid signaling.</title>
        <authorList>
            <person name="Yamagami A."/>
            <person name="Nakazawa M."/>
            <person name="Matsui M."/>
            <person name="Tujimoto M."/>
            <person name="Sakuta M."/>
            <person name="Asami T."/>
            <person name="Nakano T."/>
        </authorList>
    </citation>
    <scope>GENE FAMILY</scope>
</reference>
<reference key="7">
    <citation type="journal article" date="2013" name="J. Exp. Bot.">
        <title>LIFEGUARD proteins support plant colonization by biotrophic powdery mildew fungi.</title>
        <authorList>
            <person name="Weis C."/>
            <person name="Hueckelhoven R."/>
            <person name="Eichmann R."/>
        </authorList>
    </citation>
    <scope>GENE FAMILY</scope>
    <scope>NOMENCLATURE</scope>
    <source>
        <strain>cv. Columbia</strain>
    </source>
</reference>
<feature type="chain" id="PRO_0000272240" description="BI1-like protein">
    <location>
        <begin position="1"/>
        <end position="256"/>
    </location>
</feature>
<feature type="transmembrane region" description="Helical" evidence="1">
    <location>
        <begin position="53"/>
        <end position="73"/>
    </location>
</feature>
<feature type="transmembrane region" description="Helical" evidence="1">
    <location>
        <begin position="85"/>
        <end position="105"/>
    </location>
</feature>
<feature type="transmembrane region" description="Helical" evidence="1">
    <location>
        <begin position="113"/>
        <end position="133"/>
    </location>
</feature>
<feature type="transmembrane region" description="Helical" evidence="1">
    <location>
        <begin position="138"/>
        <end position="158"/>
    </location>
</feature>
<feature type="transmembrane region" description="Helical" evidence="1">
    <location>
        <begin position="167"/>
        <end position="187"/>
    </location>
</feature>
<feature type="transmembrane region" description="Helical" evidence="1">
    <location>
        <begin position="189"/>
        <end position="209"/>
    </location>
</feature>
<feature type="transmembrane region" description="Helical" evidence="1">
    <location>
        <begin position="228"/>
        <end position="248"/>
    </location>
</feature>
<accession>Q94A20</accession>
<accession>O23399</accession>
<accession>Q940C4</accession>
<keyword id="KW-0472">Membrane</keyword>
<keyword id="KW-1185">Reference proteome</keyword>
<keyword id="KW-0812">Transmembrane</keyword>
<keyword id="KW-1133">Transmembrane helix</keyword>
<dbReference type="EMBL" id="Z97339">
    <property type="protein sequence ID" value="CAB10325.1"/>
    <property type="status" value="ALT_SEQ"/>
    <property type="molecule type" value="Genomic_DNA"/>
</dbReference>
<dbReference type="EMBL" id="AL161541">
    <property type="protein sequence ID" value="CAB78589.1"/>
    <property type="status" value="ALT_SEQ"/>
    <property type="molecule type" value="Genomic_DNA"/>
</dbReference>
<dbReference type="EMBL" id="CP002687">
    <property type="protein sequence ID" value="AEE83607.1"/>
    <property type="molecule type" value="Genomic_DNA"/>
</dbReference>
<dbReference type="EMBL" id="AY050443">
    <property type="protein sequence ID" value="AAK91458.1"/>
    <property type="molecule type" value="mRNA"/>
</dbReference>
<dbReference type="EMBL" id="AY056115">
    <property type="protein sequence ID" value="AAL07001.1"/>
    <property type="status" value="ALT_FRAME"/>
    <property type="molecule type" value="mRNA"/>
</dbReference>
<dbReference type="EMBL" id="AY097356">
    <property type="protein sequence ID" value="AAM19872.1"/>
    <property type="molecule type" value="mRNA"/>
</dbReference>
<dbReference type="PIR" id="C71419">
    <property type="entry name" value="C71419"/>
</dbReference>
<dbReference type="RefSeq" id="NP_567466.1">
    <property type="nucleotide sequence ID" value="NM_117636.3"/>
</dbReference>
<dbReference type="SMR" id="Q94A20"/>
<dbReference type="BioGRID" id="12515">
    <property type="interactions" value="1"/>
</dbReference>
<dbReference type="FunCoup" id="Q94A20">
    <property type="interactions" value="4021"/>
</dbReference>
<dbReference type="IntAct" id="Q94A20">
    <property type="interactions" value="1"/>
</dbReference>
<dbReference type="STRING" id="3702.Q94A20"/>
<dbReference type="iPTMnet" id="Q94A20"/>
<dbReference type="PaxDb" id="3702-AT4G15470.1"/>
<dbReference type="ProteomicsDB" id="250773"/>
<dbReference type="EnsemblPlants" id="AT4G15470.1">
    <property type="protein sequence ID" value="AT4G15470.1"/>
    <property type="gene ID" value="AT4G15470"/>
</dbReference>
<dbReference type="GeneID" id="827218"/>
<dbReference type="Gramene" id="AT4G15470.1">
    <property type="protein sequence ID" value="AT4G15470.1"/>
    <property type="gene ID" value="AT4G15470"/>
</dbReference>
<dbReference type="KEGG" id="ath:AT4G15470"/>
<dbReference type="Araport" id="AT4G15470"/>
<dbReference type="TAIR" id="AT4G15470">
    <property type="gene designation" value="LFG5"/>
</dbReference>
<dbReference type="eggNOG" id="KOG2322">
    <property type="taxonomic scope" value="Eukaryota"/>
</dbReference>
<dbReference type="HOGENOM" id="CLU_058671_0_1_1"/>
<dbReference type="InParanoid" id="Q94A20"/>
<dbReference type="OMA" id="FTGWYVY"/>
<dbReference type="PhylomeDB" id="Q94A20"/>
<dbReference type="PRO" id="PR:Q94A20"/>
<dbReference type="Proteomes" id="UP000006548">
    <property type="component" value="Chromosome 4"/>
</dbReference>
<dbReference type="ExpressionAtlas" id="Q94A20">
    <property type="expression patterns" value="baseline and differential"/>
</dbReference>
<dbReference type="GO" id="GO:0016020">
    <property type="term" value="C:membrane"/>
    <property type="evidence" value="ECO:0007669"/>
    <property type="project" value="UniProtKB-SubCell"/>
</dbReference>
<dbReference type="CDD" id="cd10429">
    <property type="entry name" value="GAAP_like"/>
    <property type="match status" value="1"/>
</dbReference>
<dbReference type="InterPro" id="IPR006214">
    <property type="entry name" value="Bax_inhibitor_1-related"/>
</dbReference>
<dbReference type="PANTHER" id="PTHR23291">
    <property type="entry name" value="BAX INHIBITOR-RELATED"/>
    <property type="match status" value="1"/>
</dbReference>
<dbReference type="PANTHER" id="PTHR23291:SF50">
    <property type="entry name" value="PROTEIN LIFEGUARD 4"/>
    <property type="match status" value="1"/>
</dbReference>
<dbReference type="Pfam" id="PF01027">
    <property type="entry name" value="Bax1-I"/>
    <property type="match status" value="1"/>
</dbReference>